<comment type="function">
    <text evidence="1">Produces ATP from ADP in the presence of a proton gradient across the membrane. The alpha chain is a regulatory subunit.</text>
</comment>
<comment type="catalytic activity">
    <reaction evidence="1">
        <text>ATP + H2O + 4 H(+)(in) = ADP + phosphate + 5 H(+)(out)</text>
        <dbReference type="Rhea" id="RHEA:57720"/>
        <dbReference type="ChEBI" id="CHEBI:15377"/>
        <dbReference type="ChEBI" id="CHEBI:15378"/>
        <dbReference type="ChEBI" id="CHEBI:30616"/>
        <dbReference type="ChEBI" id="CHEBI:43474"/>
        <dbReference type="ChEBI" id="CHEBI:456216"/>
        <dbReference type="EC" id="7.1.2.2"/>
    </reaction>
</comment>
<comment type="subunit">
    <text evidence="1">F-type ATPases have 2 components, CF(1) - the catalytic core - and CF(0) - the membrane proton channel. CF(1) has five subunits: alpha(3), beta(3), gamma(1), delta(1), epsilon(1). CF(0) has three main subunits: a(1), b(2) and c(9-12). The alpha and beta chains form an alternating ring which encloses part of the gamma chain. CF(1) is attached to CF(0) by a central stalk formed by the gamma and epsilon chains, while a peripheral stalk is formed by the delta and b chains.</text>
</comment>
<comment type="subcellular location">
    <subcellularLocation>
        <location evidence="1">Cell inner membrane</location>
        <topology evidence="1">Peripheral membrane protein</topology>
    </subcellularLocation>
</comment>
<comment type="similarity">
    <text evidence="1">Belongs to the ATPase alpha/beta chains family.</text>
</comment>
<dbReference type="EC" id="7.1.2.2" evidence="1"/>
<dbReference type="EMBL" id="CP000010">
    <property type="protein sequence ID" value="AAU48030.1"/>
    <property type="molecule type" value="Genomic_DNA"/>
</dbReference>
<dbReference type="RefSeq" id="YP_104460.1">
    <property type="nucleotide sequence ID" value="NC_006348.1"/>
</dbReference>
<dbReference type="SMR" id="Q62FR7"/>
<dbReference type="KEGG" id="bma:BMA2955"/>
<dbReference type="PATRIC" id="fig|243160.12.peg.3024"/>
<dbReference type="eggNOG" id="COG0056">
    <property type="taxonomic scope" value="Bacteria"/>
</dbReference>
<dbReference type="HOGENOM" id="CLU_010091_2_1_4"/>
<dbReference type="Proteomes" id="UP000006693">
    <property type="component" value="Chromosome 1"/>
</dbReference>
<dbReference type="GO" id="GO:0005886">
    <property type="term" value="C:plasma membrane"/>
    <property type="evidence" value="ECO:0007669"/>
    <property type="project" value="UniProtKB-SubCell"/>
</dbReference>
<dbReference type="GO" id="GO:0045259">
    <property type="term" value="C:proton-transporting ATP synthase complex"/>
    <property type="evidence" value="ECO:0007669"/>
    <property type="project" value="UniProtKB-KW"/>
</dbReference>
<dbReference type="GO" id="GO:0043531">
    <property type="term" value="F:ADP binding"/>
    <property type="evidence" value="ECO:0007669"/>
    <property type="project" value="TreeGrafter"/>
</dbReference>
<dbReference type="GO" id="GO:0005524">
    <property type="term" value="F:ATP binding"/>
    <property type="evidence" value="ECO:0007669"/>
    <property type="project" value="UniProtKB-UniRule"/>
</dbReference>
<dbReference type="GO" id="GO:0046933">
    <property type="term" value="F:proton-transporting ATP synthase activity, rotational mechanism"/>
    <property type="evidence" value="ECO:0007669"/>
    <property type="project" value="UniProtKB-UniRule"/>
</dbReference>
<dbReference type="CDD" id="cd18113">
    <property type="entry name" value="ATP-synt_F1_alpha_C"/>
    <property type="match status" value="1"/>
</dbReference>
<dbReference type="CDD" id="cd18116">
    <property type="entry name" value="ATP-synt_F1_alpha_N"/>
    <property type="match status" value="1"/>
</dbReference>
<dbReference type="CDD" id="cd01132">
    <property type="entry name" value="F1-ATPase_alpha_CD"/>
    <property type="match status" value="1"/>
</dbReference>
<dbReference type="FunFam" id="1.20.150.20:FF:000001">
    <property type="entry name" value="ATP synthase subunit alpha"/>
    <property type="match status" value="1"/>
</dbReference>
<dbReference type="FunFam" id="2.40.30.20:FF:000001">
    <property type="entry name" value="ATP synthase subunit alpha"/>
    <property type="match status" value="1"/>
</dbReference>
<dbReference type="FunFam" id="3.40.50.300:FF:000002">
    <property type="entry name" value="ATP synthase subunit alpha"/>
    <property type="match status" value="1"/>
</dbReference>
<dbReference type="Gene3D" id="2.40.30.20">
    <property type="match status" value="1"/>
</dbReference>
<dbReference type="Gene3D" id="1.20.150.20">
    <property type="entry name" value="ATP synthase alpha/beta chain, C-terminal domain"/>
    <property type="match status" value="1"/>
</dbReference>
<dbReference type="Gene3D" id="3.40.50.300">
    <property type="entry name" value="P-loop containing nucleotide triphosphate hydrolases"/>
    <property type="match status" value="1"/>
</dbReference>
<dbReference type="HAMAP" id="MF_01346">
    <property type="entry name" value="ATP_synth_alpha_bact"/>
    <property type="match status" value="1"/>
</dbReference>
<dbReference type="InterPro" id="IPR023366">
    <property type="entry name" value="ATP_synth_asu-like_sf"/>
</dbReference>
<dbReference type="InterPro" id="IPR000793">
    <property type="entry name" value="ATP_synth_asu_C"/>
</dbReference>
<dbReference type="InterPro" id="IPR038376">
    <property type="entry name" value="ATP_synth_asu_C_sf"/>
</dbReference>
<dbReference type="InterPro" id="IPR033732">
    <property type="entry name" value="ATP_synth_F1_a_nt-bd_dom"/>
</dbReference>
<dbReference type="InterPro" id="IPR005294">
    <property type="entry name" value="ATP_synth_F1_asu"/>
</dbReference>
<dbReference type="InterPro" id="IPR020003">
    <property type="entry name" value="ATPase_a/bsu_AS"/>
</dbReference>
<dbReference type="InterPro" id="IPR004100">
    <property type="entry name" value="ATPase_F1/V1/A1_a/bsu_N"/>
</dbReference>
<dbReference type="InterPro" id="IPR036121">
    <property type="entry name" value="ATPase_F1/V1/A1_a/bsu_N_sf"/>
</dbReference>
<dbReference type="InterPro" id="IPR000194">
    <property type="entry name" value="ATPase_F1/V1/A1_a/bsu_nucl-bd"/>
</dbReference>
<dbReference type="InterPro" id="IPR027417">
    <property type="entry name" value="P-loop_NTPase"/>
</dbReference>
<dbReference type="NCBIfam" id="TIGR00962">
    <property type="entry name" value="atpA"/>
    <property type="match status" value="1"/>
</dbReference>
<dbReference type="NCBIfam" id="NF009884">
    <property type="entry name" value="PRK13343.1"/>
    <property type="match status" value="1"/>
</dbReference>
<dbReference type="PANTHER" id="PTHR48082">
    <property type="entry name" value="ATP SYNTHASE SUBUNIT ALPHA, MITOCHONDRIAL"/>
    <property type="match status" value="1"/>
</dbReference>
<dbReference type="PANTHER" id="PTHR48082:SF2">
    <property type="entry name" value="ATP SYNTHASE SUBUNIT ALPHA, MITOCHONDRIAL"/>
    <property type="match status" value="1"/>
</dbReference>
<dbReference type="Pfam" id="PF00006">
    <property type="entry name" value="ATP-synt_ab"/>
    <property type="match status" value="1"/>
</dbReference>
<dbReference type="Pfam" id="PF00306">
    <property type="entry name" value="ATP-synt_ab_C"/>
    <property type="match status" value="1"/>
</dbReference>
<dbReference type="Pfam" id="PF02874">
    <property type="entry name" value="ATP-synt_ab_N"/>
    <property type="match status" value="1"/>
</dbReference>
<dbReference type="PIRSF" id="PIRSF039088">
    <property type="entry name" value="F_ATPase_subunit_alpha"/>
    <property type="match status" value="1"/>
</dbReference>
<dbReference type="SUPFAM" id="SSF47917">
    <property type="entry name" value="C-terminal domain of alpha and beta subunits of F1 ATP synthase"/>
    <property type="match status" value="1"/>
</dbReference>
<dbReference type="SUPFAM" id="SSF50615">
    <property type="entry name" value="N-terminal domain of alpha and beta subunits of F1 ATP synthase"/>
    <property type="match status" value="1"/>
</dbReference>
<dbReference type="SUPFAM" id="SSF52540">
    <property type="entry name" value="P-loop containing nucleoside triphosphate hydrolases"/>
    <property type="match status" value="1"/>
</dbReference>
<dbReference type="PROSITE" id="PS00152">
    <property type="entry name" value="ATPASE_ALPHA_BETA"/>
    <property type="match status" value="1"/>
</dbReference>
<gene>
    <name evidence="1" type="primary">atpA1</name>
    <name type="synonym">atpA-1</name>
    <name type="ordered locus">BMA2955</name>
</gene>
<accession>Q62FR7</accession>
<organism>
    <name type="scientific">Burkholderia mallei (strain ATCC 23344)</name>
    <dbReference type="NCBI Taxonomy" id="243160"/>
    <lineage>
        <taxon>Bacteria</taxon>
        <taxon>Pseudomonadati</taxon>
        <taxon>Pseudomonadota</taxon>
        <taxon>Betaproteobacteria</taxon>
        <taxon>Burkholderiales</taxon>
        <taxon>Burkholderiaceae</taxon>
        <taxon>Burkholderia</taxon>
        <taxon>pseudomallei group</taxon>
    </lineage>
</organism>
<sequence>MQLNPSEISELIKSRIQGLEASADVRNQGTVISVTDGIVRIHGLSDVMQGEMLEFPGNTFGLALNLERDSVGAVILGEYEHISEGDIVKTTGRILEVPVGPELVGRVLDALGNPIDGKGPVNAKLTDAIEKIAPGVIWRKSVSQPVQTGLKSIDSMVPIGRGQRELIIGDRQCGKTAVAIDTIINQKGKDLICIYVAIGQKASSIMNVVRKLEETGALEYTIVVAASASESAAMQYLAPYAGCTMGEYFRDRGQDALIIYDDLTKQAWAYRQISLLLRRPPGREAYPGDVFYLHSRLLERAARVSEEYVEKFTNGEVKGKSGSLTALPVIETQAGDVTAFVPTNVISITDGQIFLETDLFNAGIRPAINAGVSVSRVGGAAQTKVVKKLSGGIRTDLAQYRELAAFAQFASDLDEATRKQLERGRRVTELLKQPQYQPLQVWELAVSLFSANNGYLDDLDVKDVLPFEKGLREYLKTSHADLIKRIEDTKDLSKDDESALHAALKDFKKSGAY</sequence>
<proteinExistence type="inferred from homology"/>
<evidence type="ECO:0000255" key="1">
    <source>
        <dbReference type="HAMAP-Rule" id="MF_01346"/>
    </source>
</evidence>
<keyword id="KW-0066">ATP synthesis</keyword>
<keyword id="KW-0067">ATP-binding</keyword>
<keyword id="KW-0997">Cell inner membrane</keyword>
<keyword id="KW-1003">Cell membrane</keyword>
<keyword id="KW-0139">CF(1)</keyword>
<keyword id="KW-0375">Hydrogen ion transport</keyword>
<keyword id="KW-0406">Ion transport</keyword>
<keyword id="KW-0472">Membrane</keyword>
<keyword id="KW-0547">Nucleotide-binding</keyword>
<keyword id="KW-1185">Reference proteome</keyword>
<keyword id="KW-1278">Translocase</keyword>
<keyword id="KW-0813">Transport</keyword>
<protein>
    <recommendedName>
        <fullName evidence="1">ATP synthase subunit alpha 1</fullName>
        <ecNumber evidence="1">7.1.2.2</ecNumber>
    </recommendedName>
    <alternativeName>
        <fullName evidence="1">ATP synthase F1 sector subunit alpha 1</fullName>
    </alternativeName>
    <alternativeName>
        <fullName evidence="1">F-ATPase subunit alpha 1</fullName>
    </alternativeName>
</protein>
<feature type="chain" id="PRO_0000238217" description="ATP synthase subunit alpha 1">
    <location>
        <begin position="1"/>
        <end position="513"/>
    </location>
</feature>
<feature type="binding site" evidence="1">
    <location>
        <begin position="169"/>
        <end position="176"/>
    </location>
    <ligand>
        <name>ATP</name>
        <dbReference type="ChEBI" id="CHEBI:30616"/>
    </ligand>
</feature>
<feature type="site" description="Required for activity" evidence="1">
    <location>
        <position position="373"/>
    </location>
</feature>
<name>ATPA1_BURMA</name>
<reference key="1">
    <citation type="journal article" date="2004" name="Proc. Natl. Acad. Sci. U.S.A.">
        <title>Structural flexibility in the Burkholderia mallei genome.</title>
        <authorList>
            <person name="Nierman W.C."/>
            <person name="DeShazer D."/>
            <person name="Kim H.S."/>
            <person name="Tettelin H."/>
            <person name="Nelson K.E."/>
            <person name="Feldblyum T.V."/>
            <person name="Ulrich R.L."/>
            <person name="Ronning C.M."/>
            <person name="Brinkac L.M."/>
            <person name="Daugherty S.C."/>
            <person name="Davidsen T.D."/>
            <person name="DeBoy R.T."/>
            <person name="Dimitrov G."/>
            <person name="Dodson R.J."/>
            <person name="Durkin A.S."/>
            <person name="Gwinn M.L."/>
            <person name="Haft D.H."/>
            <person name="Khouri H.M."/>
            <person name="Kolonay J.F."/>
            <person name="Madupu R."/>
            <person name="Mohammoud Y."/>
            <person name="Nelson W.C."/>
            <person name="Radune D."/>
            <person name="Romero C.M."/>
            <person name="Sarria S."/>
            <person name="Selengut J."/>
            <person name="Shamblin C."/>
            <person name="Sullivan S.A."/>
            <person name="White O."/>
            <person name="Yu Y."/>
            <person name="Zafar N."/>
            <person name="Zhou L."/>
            <person name="Fraser C.M."/>
        </authorList>
    </citation>
    <scope>NUCLEOTIDE SEQUENCE [LARGE SCALE GENOMIC DNA]</scope>
    <source>
        <strain>ATCC 23344</strain>
    </source>
</reference>